<accession>A4YI15</accession>
<dbReference type="EC" id="1.1.1.383" evidence="5"/>
<dbReference type="EMBL" id="CP000682">
    <property type="protein sequence ID" value="ABP96067.1"/>
    <property type="molecule type" value="Genomic_DNA"/>
</dbReference>
<dbReference type="SMR" id="A4YI15"/>
<dbReference type="STRING" id="399549.Msed_1927"/>
<dbReference type="KEGG" id="mse:Msed_1927"/>
<dbReference type="eggNOG" id="arCOG04465">
    <property type="taxonomic scope" value="Archaea"/>
</dbReference>
<dbReference type="HOGENOM" id="CLU_033821_0_1_2"/>
<dbReference type="UniPathway" id="UPA00047">
    <property type="reaction ID" value="UER00056"/>
</dbReference>
<dbReference type="UniPathway" id="UPA00049">
    <property type="reaction ID" value="UER00060"/>
</dbReference>
<dbReference type="Proteomes" id="UP000000242">
    <property type="component" value="Chromosome"/>
</dbReference>
<dbReference type="GO" id="GO:0004455">
    <property type="term" value="F:ketol-acid reductoisomerase activity"/>
    <property type="evidence" value="ECO:0007669"/>
    <property type="project" value="UniProtKB-UniRule"/>
</dbReference>
<dbReference type="GO" id="GO:0000287">
    <property type="term" value="F:magnesium ion binding"/>
    <property type="evidence" value="ECO:0007669"/>
    <property type="project" value="UniProtKB-UniRule"/>
</dbReference>
<dbReference type="GO" id="GO:0009097">
    <property type="term" value="P:isoleucine biosynthetic process"/>
    <property type="evidence" value="ECO:0007669"/>
    <property type="project" value="UniProtKB-UniRule"/>
</dbReference>
<dbReference type="GO" id="GO:0009099">
    <property type="term" value="P:L-valine biosynthetic process"/>
    <property type="evidence" value="ECO:0007669"/>
    <property type="project" value="UniProtKB-UniRule"/>
</dbReference>
<dbReference type="FunFam" id="3.40.50.720:FF:000023">
    <property type="entry name" value="Ketol-acid reductoisomerase (NADP(+))"/>
    <property type="match status" value="1"/>
</dbReference>
<dbReference type="Gene3D" id="6.10.240.10">
    <property type="match status" value="1"/>
</dbReference>
<dbReference type="Gene3D" id="3.40.50.720">
    <property type="entry name" value="NAD(P)-binding Rossmann-like Domain"/>
    <property type="match status" value="1"/>
</dbReference>
<dbReference type="HAMAP" id="MF_00435">
    <property type="entry name" value="IlvC"/>
    <property type="match status" value="1"/>
</dbReference>
<dbReference type="InterPro" id="IPR008927">
    <property type="entry name" value="6-PGluconate_DH-like_C_sf"/>
</dbReference>
<dbReference type="InterPro" id="IPR013023">
    <property type="entry name" value="KARI"/>
</dbReference>
<dbReference type="InterPro" id="IPR000506">
    <property type="entry name" value="KARI_C"/>
</dbReference>
<dbReference type="InterPro" id="IPR013116">
    <property type="entry name" value="KARI_N"/>
</dbReference>
<dbReference type="InterPro" id="IPR036291">
    <property type="entry name" value="NAD(P)-bd_dom_sf"/>
</dbReference>
<dbReference type="NCBIfam" id="TIGR00465">
    <property type="entry name" value="ilvC"/>
    <property type="match status" value="1"/>
</dbReference>
<dbReference type="NCBIfam" id="NF004017">
    <property type="entry name" value="PRK05479.1"/>
    <property type="match status" value="1"/>
</dbReference>
<dbReference type="PANTHER" id="PTHR21371">
    <property type="entry name" value="KETOL-ACID REDUCTOISOMERASE, MITOCHONDRIAL"/>
    <property type="match status" value="1"/>
</dbReference>
<dbReference type="PANTHER" id="PTHR21371:SF1">
    <property type="entry name" value="KETOL-ACID REDUCTOISOMERASE, MITOCHONDRIAL"/>
    <property type="match status" value="1"/>
</dbReference>
<dbReference type="Pfam" id="PF01450">
    <property type="entry name" value="KARI_C"/>
    <property type="match status" value="1"/>
</dbReference>
<dbReference type="Pfam" id="PF07991">
    <property type="entry name" value="KARI_N"/>
    <property type="match status" value="1"/>
</dbReference>
<dbReference type="SUPFAM" id="SSF48179">
    <property type="entry name" value="6-phosphogluconate dehydrogenase C-terminal domain-like"/>
    <property type="match status" value="1"/>
</dbReference>
<dbReference type="SUPFAM" id="SSF51735">
    <property type="entry name" value="NAD(P)-binding Rossmann-fold domains"/>
    <property type="match status" value="1"/>
</dbReference>
<dbReference type="PROSITE" id="PS51851">
    <property type="entry name" value="KARI_C"/>
    <property type="match status" value="1"/>
</dbReference>
<dbReference type="PROSITE" id="PS51850">
    <property type="entry name" value="KARI_N"/>
    <property type="match status" value="1"/>
</dbReference>
<organism>
    <name type="scientific">Metallosphaera sedula (strain ATCC 51363 / DSM 5348 / JCM 9185 / NBRC 15509 / TH2)</name>
    <dbReference type="NCBI Taxonomy" id="399549"/>
    <lineage>
        <taxon>Archaea</taxon>
        <taxon>Thermoproteota</taxon>
        <taxon>Thermoprotei</taxon>
        <taxon>Sulfolobales</taxon>
        <taxon>Sulfolobaceae</taxon>
        <taxon>Metallosphaera</taxon>
    </lineage>
</organism>
<protein>
    <recommendedName>
        <fullName evidence="6">Ketol-acid reductoisomerase (NAD(P)(+))</fullName>
        <shortName evidence="1 6">KARI</shortName>
        <ecNumber evidence="5">1.1.1.383</ecNumber>
    </recommendedName>
    <alternativeName>
        <fullName evidence="1">Acetohydroxy-acid isomeroreductase</fullName>
        <shortName evidence="1">AHIR</shortName>
    </alternativeName>
    <alternativeName>
        <fullName evidence="1">Alpha-keto-beta-hydroxylacyl reductoisomerase</fullName>
    </alternativeName>
    <alternativeName>
        <fullName evidence="1 6">Ketol-acid reductoisomerase type 1</fullName>
    </alternativeName>
    <alternativeName>
        <fullName evidence="1 6">Ketol-acid reductoisomerase type I</fullName>
    </alternativeName>
</protein>
<sequence length="335" mass="37293">MSHIAKIYTDKDTTLDPMKGKKIAVLGYGSQGRAWALNLRDSGLQVTVGLEREGKSWEQAKADGFTPKKTEDAVKDADVVIFLVPDMAQRLVYRERVQPYLREGMDLVFAHGFNIHYRLIEPPSNVDVYMVAPKGPGPIVRDFYVKGGGVPVLVAVHQNHSGKALEKALAIAKALGGTRAGAIETTFKEETETDLIGEQTILVGGVMELMKAAFETLVEMGYQPEVAYFETINELKMIVDLIYDKGFMGMLRAVSDTAKYGGFTVGKQVINEETRRRLREAAEKVRSGKFAEEWIEEYGRGSPTLSKGLEEMDKSLEEQTGRRLKEIIERGRPKS</sequence>
<keyword id="KW-0028">Amino-acid biosynthesis</keyword>
<keyword id="KW-0100">Branched-chain amino acid biosynthesis</keyword>
<keyword id="KW-0460">Magnesium</keyword>
<keyword id="KW-0479">Metal-binding</keyword>
<keyword id="KW-0521">NADP</keyword>
<keyword id="KW-0560">Oxidoreductase</keyword>
<keyword id="KW-1185">Reference proteome</keyword>
<proteinExistence type="evidence at protein level"/>
<evidence type="ECO:0000255" key="1">
    <source>
        <dbReference type="HAMAP-Rule" id="MF_00435"/>
    </source>
</evidence>
<evidence type="ECO:0000255" key="2">
    <source>
        <dbReference type="PROSITE-ProRule" id="PRU01197"/>
    </source>
</evidence>
<evidence type="ECO:0000255" key="3">
    <source>
        <dbReference type="PROSITE-ProRule" id="PRU01198"/>
    </source>
</evidence>
<evidence type="ECO:0000256" key="4">
    <source>
        <dbReference type="SAM" id="MobiDB-lite"/>
    </source>
</evidence>
<evidence type="ECO:0000269" key="5">
    <source>
    </source>
</evidence>
<evidence type="ECO:0000303" key="6">
    <source>
    </source>
</evidence>
<feature type="chain" id="PRO_1000124312" description="Ketol-acid reductoisomerase (NAD(P)(+))">
    <location>
        <begin position="1"/>
        <end position="335"/>
    </location>
</feature>
<feature type="domain" description="KARI N-terminal Rossmann" evidence="2">
    <location>
        <begin position="5"/>
        <end position="185"/>
    </location>
</feature>
<feature type="domain" description="KARI C-terminal knotted" evidence="3">
    <location>
        <begin position="186"/>
        <end position="331"/>
    </location>
</feature>
<feature type="region of interest" description="Disordered" evidence="4">
    <location>
        <begin position="301"/>
        <end position="335"/>
    </location>
</feature>
<feature type="compositionally biased region" description="Basic and acidic residues" evidence="4">
    <location>
        <begin position="308"/>
        <end position="335"/>
    </location>
</feature>
<feature type="active site" evidence="1">
    <location>
        <position position="111"/>
    </location>
</feature>
<feature type="binding site" evidence="1">
    <location>
        <begin position="28"/>
        <end position="31"/>
    </location>
    <ligand>
        <name>NADP(+)</name>
        <dbReference type="ChEBI" id="CHEBI:58349"/>
    </ligand>
</feature>
<feature type="binding site" evidence="1">
    <location>
        <position position="52"/>
    </location>
    <ligand>
        <name>NADP(+)</name>
        <dbReference type="ChEBI" id="CHEBI:58349"/>
    </ligand>
</feature>
<feature type="binding site" evidence="1">
    <location>
        <position position="56"/>
    </location>
    <ligand>
        <name>NADP(+)</name>
        <dbReference type="ChEBI" id="CHEBI:58349"/>
    </ligand>
</feature>
<feature type="binding site" evidence="1">
    <location>
        <begin position="86"/>
        <end position="89"/>
    </location>
    <ligand>
        <name>NADP(+)</name>
        <dbReference type="ChEBI" id="CHEBI:58349"/>
    </ligand>
</feature>
<feature type="binding site" evidence="1">
    <location>
        <position position="137"/>
    </location>
    <ligand>
        <name>NADP(+)</name>
        <dbReference type="ChEBI" id="CHEBI:58349"/>
    </ligand>
</feature>
<feature type="binding site" evidence="1">
    <location>
        <position position="194"/>
    </location>
    <ligand>
        <name>Mg(2+)</name>
        <dbReference type="ChEBI" id="CHEBI:18420"/>
        <label>1</label>
    </ligand>
</feature>
<feature type="binding site" evidence="1">
    <location>
        <position position="194"/>
    </location>
    <ligand>
        <name>Mg(2+)</name>
        <dbReference type="ChEBI" id="CHEBI:18420"/>
        <label>2</label>
    </ligand>
</feature>
<feature type="binding site" evidence="1">
    <location>
        <position position="198"/>
    </location>
    <ligand>
        <name>Mg(2+)</name>
        <dbReference type="ChEBI" id="CHEBI:18420"/>
        <label>1</label>
    </ligand>
</feature>
<feature type="binding site" evidence="1">
    <location>
        <position position="230"/>
    </location>
    <ligand>
        <name>Mg(2+)</name>
        <dbReference type="ChEBI" id="CHEBI:18420"/>
        <label>2</label>
    </ligand>
</feature>
<feature type="binding site" evidence="1">
    <location>
        <position position="234"/>
    </location>
    <ligand>
        <name>Mg(2+)</name>
        <dbReference type="ChEBI" id="CHEBI:18420"/>
        <label>2</label>
    </ligand>
</feature>
<feature type="binding site" evidence="1">
    <location>
        <position position="255"/>
    </location>
    <ligand>
        <name>substrate</name>
    </ligand>
</feature>
<comment type="function">
    <text evidence="5">Involved in the biosynthesis of branched-chain amino acids (BCAA). Catalyzes an alkyl-migration followed by a ketol-acid reduction of (S)-2-acetolactate (S2AL) to yield (R)-2,3-dihydroxy-isovalerate. In the isomerase reaction, S2AL is rearranged via a Mg-dependent methyl migration to produce 3-hydroxy-3-methyl-2-ketobutyrate (HMKB). In the reductase reaction, this 2-ketoacid undergoes a metal-dependent reduction by NADPH or NADH to yield (R)-2,3-dihydroxy-isovalerate.</text>
</comment>
<comment type="catalytic activity">
    <reaction evidence="5">
        <text>(2R)-2,3-dihydroxy-3-methylbutanoate + NAD(+) = (2S)-2-acetolactate + NADH + H(+)</text>
        <dbReference type="Rhea" id="RHEA:30627"/>
        <dbReference type="ChEBI" id="CHEBI:15378"/>
        <dbReference type="ChEBI" id="CHEBI:49072"/>
        <dbReference type="ChEBI" id="CHEBI:57540"/>
        <dbReference type="ChEBI" id="CHEBI:57945"/>
        <dbReference type="ChEBI" id="CHEBI:58476"/>
        <dbReference type="EC" id="1.1.1.383"/>
    </reaction>
</comment>
<comment type="catalytic activity">
    <reaction evidence="5">
        <text>(2R)-2,3-dihydroxy-3-methylbutanoate + NADP(+) = (2S)-2-acetolactate + NADPH + H(+)</text>
        <dbReference type="Rhea" id="RHEA:22068"/>
        <dbReference type="ChEBI" id="CHEBI:15378"/>
        <dbReference type="ChEBI" id="CHEBI:49072"/>
        <dbReference type="ChEBI" id="CHEBI:57783"/>
        <dbReference type="ChEBI" id="CHEBI:58349"/>
        <dbReference type="ChEBI" id="CHEBI:58476"/>
        <dbReference type="EC" id="1.1.1.383"/>
    </reaction>
</comment>
<comment type="cofactor">
    <cofactor evidence="1">
        <name>Mg(2+)</name>
        <dbReference type="ChEBI" id="CHEBI:18420"/>
    </cofactor>
    <text evidence="1">Binds 2 magnesium ions per subunit.</text>
</comment>
<comment type="biophysicochemical properties">
    <kinetics>
        <KM evidence="5">24 uM for NADH (at pH 7 with S2AL as substrate)</KM>
        <KM evidence="5">31 uM for NADPH (at pH 7 with S2AL as substrate)</KM>
        <text evidence="5">kcat is 0.07 sec(-1) for reductoisomerase activity with NADPH (at pH 7 with S2AL as substrate). kcat is 0.06 sec(-1) for reductoisomerase activity with NADH (at pH 7 with S2AL as substrate).</text>
    </kinetics>
</comment>
<comment type="pathway">
    <text evidence="1">Amino-acid biosynthesis; L-isoleucine biosynthesis; L-isoleucine from 2-oxobutanoate: step 2/4.</text>
</comment>
<comment type="pathway">
    <text evidence="1">Amino-acid biosynthesis; L-valine biosynthesis; L-valine from pyruvate: step 2/4.</text>
</comment>
<comment type="similarity">
    <text evidence="1">Belongs to the ketol-acid reductoisomerase family.</text>
</comment>
<reference key="1">
    <citation type="journal article" date="2008" name="Appl. Environ. Microbiol.">
        <title>The genome sequence of the metal-mobilizing, extremely thermoacidophilic archaeon Metallosphaera sedula provides insights into bioleaching-associated metabolism.</title>
        <authorList>
            <person name="Auernik K.S."/>
            <person name="Maezato Y."/>
            <person name="Blum P.H."/>
            <person name="Kelly R.M."/>
        </authorList>
    </citation>
    <scope>NUCLEOTIDE SEQUENCE [LARGE SCALE GENOMIC DNA]</scope>
    <source>
        <strain>ATCC 51363 / DSM 5348 / JCM 9185 / NBRC 15509 / TH2</strain>
    </source>
</reference>
<reference key="2">
    <citation type="journal article" date="2014" name="Metab. Eng.">
        <title>Uncovering rare NADH-preferring ketol-acid reductoisomerases.</title>
        <authorList>
            <person name="Brinkmann-Chen S."/>
            <person name="Cahn J.K."/>
            <person name="Arnold F.H."/>
        </authorList>
    </citation>
    <scope>FUNCTION</scope>
    <scope>CATALYTIC ACTIVITY</scope>
    <scope>BIOPHYSICOCHEMICAL PROPERTIES</scope>
    <scope>SUBSTRATE SPECIFICITY</scope>
</reference>
<name>ILVC_METS5</name>
<gene>
    <name evidence="1" type="primary">ilvC</name>
    <name type="ordered locus">Msed_1927</name>
</gene>